<sequence>MREKPKYLPPTLREKHRYIAFQLIGERPFRKDEVKKAIWEASLSTLGVLGSAKAKPWFIRFDEKSQTGIVRVDRKHVEELRFALTLVTEINGSKAIFRTLGVSGTIKRLKRKFLAEFGWR</sequence>
<comment type="function">
    <text evidence="1">Part of ribonuclease P, a protein complex that generates mature tRNA molecules by cleaving their 5'-ends.</text>
</comment>
<comment type="catalytic activity">
    <reaction evidence="1">
        <text>Endonucleolytic cleavage of RNA, removing 5'-extranucleotides from tRNA precursor.</text>
        <dbReference type="EC" id="3.1.26.5"/>
    </reaction>
</comment>
<comment type="subunit">
    <text evidence="1">Consists of a catalytic RNA component and at least 4-5 protein subunits.</text>
</comment>
<comment type="subcellular location">
    <subcellularLocation>
        <location evidence="1">Cytoplasm</location>
    </subcellularLocation>
</comment>
<comment type="similarity">
    <text evidence="1">Belongs to the eukaryotic/archaeal RNase P protein component 2 family.</text>
</comment>
<reference key="1">
    <citation type="journal article" date="2007" name="Genome Biol.">
        <title>Genome analysis and genome-wide proteomics of Thermococcus gammatolerans, the most radioresistant organism known amongst the Archaea.</title>
        <authorList>
            <person name="Zivanovic Y."/>
            <person name="Armengaud J."/>
            <person name="Lagorce A."/>
            <person name="Leplat C."/>
            <person name="Guerin P."/>
            <person name="Dutertre M."/>
            <person name="Anthouard V."/>
            <person name="Forterre P."/>
            <person name="Wincker P."/>
            <person name="Confalonieri F."/>
        </authorList>
    </citation>
    <scope>NUCLEOTIDE SEQUENCE [LARGE SCALE GENOMIC DNA]</scope>
    <source>
        <strain>DSM 15229 / JCM 11827 / EJ3</strain>
    </source>
</reference>
<protein>
    <recommendedName>
        <fullName evidence="1">Ribonuclease P protein component 2</fullName>
        <shortName evidence="1">RNase P component 2</shortName>
        <ecNumber evidence="1">3.1.26.5</ecNumber>
    </recommendedName>
    <alternativeName>
        <fullName evidence="1">Pop5</fullName>
    </alternativeName>
</protein>
<keyword id="KW-0963">Cytoplasm</keyword>
<keyword id="KW-0255">Endonuclease</keyword>
<keyword id="KW-0378">Hydrolase</keyword>
<keyword id="KW-0540">Nuclease</keyword>
<keyword id="KW-1185">Reference proteome</keyword>
<keyword id="KW-0819">tRNA processing</keyword>
<evidence type="ECO:0000255" key="1">
    <source>
        <dbReference type="HAMAP-Rule" id="MF_00755"/>
    </source>
</evidence>
<gene>
    <name evidence="1" type="primary">rnp2</name>
    <name type="ordered locus">TGAM_0596</name>
</gene>
<name>RNP2_THEGJ</name>
<feature type="chain" id="PRO_1000212859" description="Ribonuclease P protein component 2">
    <location>
        <begin position="1"/>
        <end position="120"/>
    </location>
</feature>
<dbReference type="EC" id="3.1.26.5" evidence="1"/>
<dbReference type="EMBL" id="CP001398">
    <property type="protein sequence ID" value="ACS33098.1"/>
    <property type="molecule type" value="Genomic_DNA"/>
</dbReference>
<dbReference type="RefSeq" id="WP_015858216.1">
    <property type="nucleotide sequence ID" value="NC_012804.1"/>
</dbReference>
<dbReference type="SMR" id="C5A4D6"/>
<dbReference type="STRING" id="593117.TGAM_0596"/>
<dbReference type="PaxDb" id="593117-TGAM_0596"/>
<dbReference type="GeneID" id="7987219"/>
<dbReference type="KEGG" id="tga:TGAM_0596"/>
<dbReference type="PATRIC" id="fig|593117.10.peg.594"/>
<dbReference type="eggNOG" id="arCOG01365">
    <property type="taxonomic scope" value="Archaea"/>
</dbReference>
<dbReference type="HOGENOM" id="CLU_137733_1_0_2"/>
<dbReference type="OrthoDB" id="19261at2157"/>
<dbReference type="Proteomes" id="UP000001488">
    <property type="component" value="Chromosome"/>
</dbReference>
<dbReference type="GO" id="GO:0005737">
    <property type="term" value="C:cytoplasm"/>
    <property type="evidence" value="ECO:0007669"/>
    <property type="project" value="UniProtKB-SubCell"/>
</dbReference>
<dbReference type="GO" id="GO:0030677">
    <property type="term" value="C:ribonuclease P complex"/>
    <property type="evidence" value="ECO:0007669"/>
    <property type="project" value="UniProtKB-UniRule"/>
</dbReference>
<dbReference type="GO" id="GO:0004526">
    <property type="term" value="F:ribonuclease P activity"/>
    <property type="evidence" value="ECO:0007669"/>
    <property type="project" value="UniProtKB-UniRule"/>
</dbReference>
<dbReference type="GO" id="GO:0001682">
    <property type="term" value="P:tRNA 5'-leader removal"/>
    <property type="evidence" value="ECO:0007669"/>
    <property type="project" value="UniProtKB-UniRule"/>
</dbReference>
<dbReference type="FunFam" id="3.30.70.3250:FF:000007">
    <property type="entry name" value="Ribonuclease P protein component 2"/>
    <property type="match status" value="1"/>
</dbReference>
<dbReference type="Gene3D" id="3.30.70.3250">
    <property type="entry name" value="Ribonuclease P, Pop5 subunit"/>
    <property type="match status" value="1"/>
</dbReference>
<dbReference type="HAMAP" id="MF_00755">
    <property type="entry name" value="RNase_P_2"/>
    <property type="match status" value="1"/>
</dbReference>
<dbReference type="InterPro" id="IPR002759">
    <property type="entry name" value="Pop5/Rpp14/Rnp2-like"/>
</dbReference>
<dbReference type="InterPro" id="IPR038085">
    <property type="entry name" value="Rnp2-like_sf"/>
</dbReference>
<dbReference type="InterPro" id="IPR016434">
    <property type="entry name" value="Rnp2_archaea"/>
</dbReference>
<dbReference type="NCBIfam" id="NF002986">
    <property type="entry name" value="PRK03717.1"/>
    <property type="match status" value="1"/>
</dbReference>
<dbReference type="PANTHER" id="PTHR15441">
    <property type="entry name" value="RIBONUCLEASE P PROTEIN SUBUNIT P14"/>
    <property type="match status" value="1"/>
</dbReference>
<dbReference type="PANTHER" id="PTHR15441:SF2">
    <property type="entry name" value="RIBONUCLEASE P_MRP PROTEIN SUBUNIT POP5"/>
    <property type="match status" value="1"/>
</dbReference>
<dbReference type="Pfam" id="PF01900">
    <property type="entry name" value="RNase_P_Rpp14"/>
    <property type="match status" value="1"/>
</dbReference>
<dbReference type="PIRSF" id="PIRSF004952">
    <property type="entry name" value="RNase_P_2"/>
    <property type="match status" value="1"/>
</dbReference>
<dbReference type="SUPFAM" id="SSF160350">
    <property type="entry name" value="Rnp2-like"/>
    <property type="match status" value="1"/>
</dbReference>
<accession>C5A4D6</accession>
<proteinExistence type="inferred from homology"/>
<organism>
    <name type="scientific">Thermococcus gammatolerans (strain DSM 15229 / JCM 11827 / EJ3)</name>
    <dbReference type="NCBI Taxonomy" id="593117"/>
    <lineage>
        <taxon>Archaea</taxon>
        <taxon>Methanobacteriati</taxon>
        <taxon>Methanobacteriota</taxon>
        <taxon>Thermococci</taxon>
        <taxon>Thermococcales</taxon>
        <taxon>Thermococcaceae</taxon>
        <taxon>Thermococcus</taxon>
    </lineage>
</organism>